<accession>P00612</accession>
<name>PA2B3_LATSE</name>
<evidence type="ECO:0000250" key="1"/>
<evidence type="ECO:0000255" key="2">
    <source>
        <dbReference type="PROSITE-ProRule" id="PRU10035"/>
    </source>
</evidence>
<evidence type="ECO:0000255" key="3">
    <source>
        <dbReference type="PROSITE-ProRule" id="PRU10036"/>
    </source>
</evidence>
<evidence type="ECO:0000269" key="4">
    <source>
    </source>
</evidence>
<evidence type="ECO:0000305" key="5"/>
<protein>
    <recommendedName>
        <fullName>Basic phospholipase A2 3</fullName>
        <shortName>svPLA2</shortName>
        <ecNumber>3.1.1.4</ecNumber>
    </recommendedName>
    <alternativeName>
        <fullName>Phosphatidylcholine 2-acylhydrolase</fullName>
    </alternativeName>
    <alternativeName>
        <fullName>Phospholipase A2 isozyme III</fullName>
    </alternativeName>
</protein>
<dbReference type="EC" id="3.1.1.4"/>
<dbReference type="PIR" id="A00753">
    <property type="entry name" value="PSLT3E"/>
</dbReference>
<dbReference type="SMR" id="P00612"/>
<dbReference type="GO" id="GO:0005576">
    <property type="term" value="C:extracellular region"/>
    <property type="evidence" value="ECO:0007669"/>
    <property type="project" value="UniProtKB-SubCell"/>
</dbReference>
<dbReference type="GO" id="GO:0005509">
    <property type="term" value="F:calcium ion binding"/>
    <property type="evidence" value="ECO:0007669"/>
    <property type="project" value="InterPro"/>
</dbReference>
<dbReference type="GO" id="GO:0047498">
    <property type="term" value="F:calcium-dependent phospholipase A2 activity"/>
    <property type="evidence" value="ECO:0007669"/>
    <property type="project" value="TreeGrafter"/>
</dbReference>
<dbReference type="GO" id="GO:0005543">
    <property type="term" value="F:phospholipid binding"/>
    <property type="evidence" value="ECO:0007669"/>
    <property type="project" value="TreeGrafter"/>
</dbReference>
<dbReference type="GO" id="GO:0050482">
    <property type="term" value="P:arachidonate secretion"/>
    <property type="evidence" value="ECO:0007669"/>
    <property type="project" value="InterPro"/>
</dbReference>
<dbReference type="GO" id="GO:0016042">
    <property type="term" value="P:lipid catabolic process"/>
    <property type="evidence" value="ECO:0007669"/>
    <property type="project" value="UniProtKB-KW"/>
</dbReference>
<dbReference type="GO" id="GO:0006644">
    <property type="term" value="P:phospholipid metabolic process"/>
    <property type="evidence" value="ECO:0007669"/>
    <property type="project" value="InterPro"/>
</dbReference>
<dbReference type="CDD" id="cd00125">
    <property type="entry name" value="PLA2c"/>
    <property type="match status" value="1"/>
</dbReference>
<dbReference type="FunFam" id="1.20.90.10:FF:000007">
    <property type="entry name" value="Acidic phospholipase A2"/>
    <property type="match status" value="1"/>
</dbReference>
<dbReference type="Gene3D" id="1.20.90.10">
    <property type="entry name" value="Phospholipase A2 domain"/>
    <property type="match status" value="1"/>
</dbReference>
<dbReference type="InterPro" id="IPR001211">
    <property type="entry name" value="PLipase_A2"/>
</dbReference>
<dbReference type="InterPro" id="IPR033112">
    <property type="entry name" value="PLipase_A2_Asp_AS"/>
</dbReference>
<dbReference type="InterPro" id="IPR016090">
    <property type="entry name" value="PLipase_A2_dom"/>
</dbReference>
<dbReference type="InterPro" id="IPR036444">
    <property type="entry name" value="PLipase_A2_dom_sf"/>
</dbReference>
<dbReference type="InterPro" id="IPR033113">
    <property type="entry name" value="PLipase_A2_His_AS"/>
</dbReference>
<dbReference type="PANTHER" id="PTHR11716:SF51">
    <property type="entry name" value="PHOSPHOLIPASE A2"/>
    <property type="match status" value="1"/>
</dbReference>
<dbReference type="PANTHER" id="PTHR11716">
    <property type="entry name" value="PHOSPHOLIPASE A2 FAMILY MEMBER"/>
    <property type="match status" value="1"/>
</dbReference>
<dbReference type="Pfam" id="PF00068">
    <property type="entry name" value="Phospholip_A2_1"/>
    <property type="match status" value="1"/>
</dbReference>
<dbReference type="PRINTS" id="PR00389">
    <property type="entry name" value="PHPHLIPASEA2"/>
</dbReference>
<dbReference type="SMART" id="SM00085">
    <property type="entry name" value="PA2c"/>
    <property type="match status" value="1"/>
</dbReference>
<dbReference type="SUPFAM" id="SSF48619">
    <property type="entry name" value="Phospholipase A2, PLA2"/>
    <property type="match status" value="1"/>
</dbReference>
<dbReference type="PROSITE" id="PS00119">
    <property type="entry name" value="PA2_ASP"/>
    <property type="match status" value="1"/>
</dbReference>
<dbReference type="PROSITE" id="PS00118">
    <property type="entry name" value="PA2_HIS"/>
    <property type="match status" value="1"/>
</dbReference>
<proteinExistence type="evidence at protein level"/>
<comment type="function">
    <text evidence="1">PLA2 catalyzes the calcium-dependent hydrolysis of the 2-acyl groups in 3-sn-phosphoglycerides.</text>
</comment>
<comment type="catalytic activity">
    <reaction evidence="2 3">
        <text>a 1,2-diacyl-sn-glycero-3-phosphocholine + H2O = a 1-acyl-sn-glycero-3-phosphocholine + a fatty acid + H(+)</text>
        <dbReference type="Rhea" id="RHEA:15801"/>
        <dbReference type="ChEBI" id="CHEBI:15377"/>
        <dbReference type="ChEBI" id="CHEBI:15378"/>
        <dbReference type="ChEBI" id="CHEBI:28868"/>
        <dbReference type="ChEBI" id="CHEBI:57643"/>
        <dbReference type="ChEBI" id="CHEBI:58168"/>
        <dbReference type="EC" id="3.1.1.4"/>
    </reaction>
</comment>
<comment type="cofactor">
    <cofactor evidence="1">
        <name>Ca(2+)</name>
        <dbReference type="ChEBI" id="CHEBI:29108"/>
    </cofactor>
    <text evidence="1">Binds 1 Ca(2+) ion.</text>
</comment>
<comment type="subunit">
    <text evidence="4">Monomer.</text>
</comment>
<comment type="subcellular location">
    <subcellularLocation>
        <location>Secreted</location>
    </subcellularLocation>
</comment>
<comment type="tissue specificity">
    <text>Expressed by the venom gland.</text>
</comment>
<comment type="similarity">
    <text evidence="5">Belongs to the phospholipase A2 family. Group I subfamily. D49 sub-subfamily.</text>
</comment>
<feature type="chain" id="PRO_0000161653" description="Basic phospholipase A2 3">
    <location>
        <begin position="1"/>
        <end position="118"/>
    </location>
</feature>
<feature type="active site" evidence="1">
    <location>
        <position position="48"/>
    </location>
</feature>
<feature type="active site" evidence="1">
    <location>
        <position position="92"/>
    </location>
</feature>
<feature type="binding site" evidence="1">
    <location>
        <position position="28"/>
    </location>
    <ligand>
        <name>Ca(2+)</name>
        <dbReference type="ChEBI" id="CHEBI:29108"/>
    </ligand>
</feature>
<feature type="binding site" evidence="1">
    <location>
        <position position="30"/>
    </location>
    <ligand>
        <name>Ca(2+)</name>
        <dbReference type="ChEBI" id="CHEBI:29108"/>
    </ligand>
</feature>
<feature type="binding site" evidence="1">
    <location>
        <position position="32"/>
    </location>
    <ligand>
        <name>Ca(2+)</name>
        <dbReference type="ChEBI" id="CHEBI:29108"/>
    </ligand>
</feature>
<feature type="binding site" evidence="1">
    <location>
        <position position="49"/>
    </location>
    <ligand>
        <name>Ca(2+)</name>
        <dbReference type="ChEBI" id="CHEBI:29108"/>
    </ligand>
</feature>
<feature type="disulfide bond" evidence="1">
    <location>
        <begin position="11"/>
        <end position="71"/>
    </location>
</feature>
<feature type="disulfide bond" evidence="1">
    <location>
        <begin position="27"/>
        <end position="117"/>
    </location>
</feature>
<feature type="disulfide bond" evidence="1">
    <location>
        <begin position="29"/>
        <end position="45"/>
    </location>
</feature>
<feature type="disulfide bond" evidence="1">
    <location>
        <begin position="44"/>
        <end position="98"/>
    </location>
</feature>
<feature type="disulfide bond" evidence="1">
    <location>
        <begin position="51"/>
        <end position="91"/>
    </location>
</feature>
<feature type="disulfide bond" evidence="1">
    <location>
        <begin position="60"/>
        <end position="84"/>
    </location>
</feature>
<feature type="disulfide bond" evidence="1">
    <location>
        <begin position="78"/>
        <end position="89"/>
    </location>
</feature>
<sequence>NLVQFTYLIQCANSGKRASYHYADYGCYCGAGGSGTPVDELDRCCKIHDNCYGEAEKMGCYPKLTMYNYYCGTQSPTCDDKTGCQRYVCACDLEAAKCFARSPYNNKNYNIDTSKRCK</sequence>
<organism>
    <name type="scientific">Laticauda semifasciata</name>
    <name type="common">Black-banded sea krait</name>
    <name type="synonym">Pseudolaticauda semifasciata</name>
    <dbReference type="NCBI Taxonomy" id="8631"/>
    <lineage>
        <taxon>Eukaryota</taxon>
        <taxon>Metazoa</taxon>
        <taxon>Chordata</taxon>
        <taxon>Craniata</taxon>
        <taxon>Vertebrata</taxon>
        <taxon>Euteleostomi</taxon>
        <taxon>Lepidosauria</taxon>
        <taxon>Squamata</taxon>
        <taxon>Bifurcata</taxon>
        <taxon>Unidentata</taxon>
        <taxon>Episquamata</taxon>
        <taxon>Toxicofera</taxon>
        <taxon>Serpentes</taxon>
        <taxon>Colubroidea</taxon>
        <taxon>Elapidae</taxon>
        <taxon>Laticaudinae</taxon>
        <taxon>Laticauda</taxon>
    </lineage>
</organism>
<reference key="1">
    <citation type="journal article" date="1982" name="Biochem. J.">
        <title>Amino acid sequences of three phospholipases A I, III and IV from the venom of the sea snake Laticauda semifasciata.</title>
        <authorList>
            <person name="Nishida S."/>
            <person name="Kim H.S."/>
            <person name="Tamiya N."/>
        </authorList>
    </citation>
    <scope>PROTEIN SEQUENCE</scope>
    <scope>SUBUNIT</scope>
    <source>
        <tissue>Venom</tissue>
    </source>
</reference>
<keyword id="KW-0106">Calcium</keyword>
<keyword id="KW-0903">Direct protein sequencing</keyword>
<keyword id="KW-1015">Disulfide bond</keyword>
<keyword id="KW-0378">Hydrolase</keyword>
<keyword id="KW-0442">Lipid degradation</keyword>
<keyword id="KW-0443">Lipid metabolism</keyword>
<keyword id="KW-0479">Metal-binding</keyword>
<keyword id="KW-0964">Secreted</keyword>